<name>TYY1_HUMAN</name>
<dbReference type="EMBL" id="M77698">
    <property type="protein sequence ID" value="AAA59467.1"/>
    <property type="molecule type" value="mRNA"/>
</dbReference>
<dbReference type="EMBL" id="M76541">
    <property type="protein sequence ID" value="AAA59926.1"/>
    <property type="molecule type" value="mRNA"/>
</dbReference>
<dbReference type="EMBL" id="Z14077">
    <property type="protein sequence ID" value="CAA78455.1"/>
    <property type="molecule type" value="mRNA"/>
</dbReference>
<dbReference type="EMBL" id="BC037308">
    <property type="protein sequence ID" value="AAH37308.1"/>
    <property type="molecule type" value="mRNA"/>
</dbReference>
<dbReference type="EMBL" id="BC065366">
    <property type="protein sequence ID" value="AAH65366.1"/>
    <property type="molecule type" value="mRNA"/>
</dbReference>
<dbReference type="CCDS" id="CCDS9957.1"/>
<dbReference type="PIR" id="A40350">
    <property type="entry name" value="A40350"/>
</dbReference>
<dbReference type="RefSeq" id="NP_003394.1">
    <property type="nucleotide sequence ID" value="NM_003403.5"/>
</dbReference>
<dbReference type="PDB" id="1UBD">
    <property type="method" value="X-ray"/>
    <property type="resolution" value="2.50 A"/>
    <property type="chains" value="C=291-414"/>
</dbReference>
<dbReference type="PDB" id="1ZNM">
    <property type="method" value="NMR"/>
    <property type="chains" value="A=352-379"/>
</dbReference>
<dbReference type="PDB" id="4C5I">
    <property type="method" value="X-ray"/>
    <property type="resolution" value="2.59 A"/>
    <property type="chains" value="C=199-228"/>
</dbReference>
<dbReference type="PDBsum" id="1UBD"/>
<dbReference type="PDBsum" id="1ZNM"/>
<dbReference type="PDBsum" id="4C5I"/>
<dbReference type="SMR" id="P25490"/>
<dbReference type="BioGRID" id="113360">
    <property type="interactions" value="489"/>
</dbReference>
<dbReference type="ComplexPortal" id="CPX-846">
    <property type="entry name" value="INO80 chromatin remodeling complex"/>
</dbReference>
<dbReference type="CORUM" id="P25490"/>
<dbReference type="DIP" id="DIP-150N"/>
<dbReference type="FunCoup" id="P25490">
    <property type="interactions" value="5078"/>
</dbReference>
<dbReference type="IntAct" id="P25490">
    <property type="interactions" value="284"/>
</dbReference>
<dbReference type="MINT" id="P25490"/>
<dbReference type="STRING" id="9606.ENSP00000262238"/>
<dbReference type="GlyCosmos" id="P25490">
    <property type="glycosylation" value="1 site, 1 glycan"/>
</dbReference>
<dbReference type="GlyGen" id="P25490">
    <property type="glycosylation" value="1 site, 1 O-linked glycan (1 site)"/>
</dbReference>
<dbReference type="iPTMnet" id="P25490"/>
<dbReference type="PhosphoSitePlus" id="P25490"/>
<dbReference type="BioMuta" id="YY1"/>
<dbReference type="DMDM" id="3915889"/>
<dbReference type="jPOST" id="P25490"/>
<dbReference type="MassIVE" id="P25490"/>
<dbReference type="PaxDb" id="9606-ENSP00000262238"/>
<dbReference type="PeptideAtlas" id="P25490"/>
<dbReference type="ProteomicsDB" id="54279"/>
<dbReference type="Pumba" id="P25490"/>
<dbReference type="Antibodypedia" id="9">
    <property type="antibodies" value="612 antibodies from 43 providers"/>
</dbReference>
<dbReference type="DNASU" id="7528"/>
<dbReference type="Ensembl" id="ENST00000262238.10">
    <property type="protein sequence ID" value="ENSP00000262238.4"/>
    <property type="gene ID" value="ENSG00000100811.15"/>
</dbReference>
<dbReference type="GeneID" id="7528"/>
<dbReference type="KEGG" id="hsa:7528"/>
<dbReference type="MANE-Select" id="ENST00000262238.10">
    <property type="protein sequence ID" value="ENSP00000262238.4"/>
    <property type="RefSeq nucleotide sequence ID" value="NM_003403.5"/>
    <property type="RefSeq protein sequence ID" value="NP_003394.1"/>
</dbReference>
<dbReference type="UCSC" id="uc001ygy.3">
    <property type="organism name" value="human"/>
</dbReference>
<dbReference type="AGR" id="HGNC:12856"/>
<dbReference type="CTD" id="7528"/>
<dbReference type="DisGeNET" id="7528"/>
<dbReference type="GeneCards" id="YY1"/>
<dbReference type="GeneReviews" id="YY1"/>
<dbReference type="HGNC" id="HGNC:12856">
    <property type="gene designation" value="YY1"/>
</dbReference>
<dbReference type="HPA" id="ENSG00000100811">
    <property type="expression patterns" value="Low tissue specificity"/>
</dbReference>
<dbReference type="MalaCards" id="YY1"/>
<dbReference type="MIM" id="600013">
    <property type="type" value="gene"/>
</dbReference>
<dbReference type="MIM" id="617557">
    <property type="type" value="phenotype"/>
</dbReference>
<dbReference type="neXtProt" id="NX_P25490"/>
<dbReference type="OpenTargets" id="ENSG00000100811"/>
<dbReference type="Orphanet" id="506358">
    <property type="disease" value="Gabriele-de Vries syndrome"/>
</dbReference>
<dbReference type="Orphanet" id="97279">
    <property type="disease" value="Insulinoma"/>
</dbReference>
<dbReference type="PharmGKB" id="PA37445"/>
<dbReference type="VEuPathDB" id="HostDB:ENSG00000100811"/>
<dbReference type="eggNOG" id="KOG1721">
    <property type="taxonomic scope" value="Eukaryota"/>
</dbReference>
<dbReference type="GeneTree" id="ENSGT00940000154763"/>
<dbReference type="InParanoid" id="P25490"/>
<dbReference type="OMA" id="DAGGRKW"/>
<dbReference type="OrthoDB" id="10264072at2759"/>
<dbReference type="PAN-GO" id="P25490">
    <property type="GO annotations" value="5 GO annotations based on evolutionary models"/>
</dbReference>
<dbReference type="PhylomeDB" id="P25490"/>
<dbReference type="TreeFam" id="TF106493"/>
<dbReference type="PathwayCommons" id="P25490"/>
<dbReference type="Reactome" id="R-HSA-5617472">
    <property type="pathway name" value="Activation of anterior HOX genes in hindbrain development during early embryogenesis"/>
</dbReference>
<dbReference type="Reactome" id="R-HSA-5689603">
    <property type="pathway name" value="UCH proteinases"/>
</dbReference>
<dbReference type="Reactome" id="R-HSA-5696394">
    <property type="pathway name" value="DNA Damage Recognition in GG-NER"/>
</dbReference>
<dbReference type="Reactome" id="R-HSA-8866910">
    <property type="pathway name" value="TFAP2 (AP-2) family regulates transcription of growth factors and their receptors"/>
</dbReference>
<dbReference type="Reactome" id="R-HSA-9018519">
    <property type="pathway name" value="Estrogen-dependent gene expression"/>
</dbReference>
<dbReference type="SignaLink" id="P25490"/>
<dbReference type="SIGNOR" id="P25490"/>
<dbReference type="BioGRID-ORCS" id="7528">
    <property type="hits" value="633 hits in 1197 CRISPR screens"/>
</dbReference>
<dbReference type="CD-CODE" id="804901D1">
    <property type="entry name" value="Nuclear speckle"/>
</dbReference>
<dbReference type="CD-CODE" id="91857CE7">
    <property type="entry name" value="Nucleolus"/>
</dbReference>
<dbReference type="ChiTaRS" id="YY1">
    <property type="organism name" value="human"/>
</dbReference>
<dbReference type="EvolutionaryTrace" id="P25490"/>
<dbReference type="GeneWiki" id="YY1"/>
<dbReference type="GenomeRNAi" id="7528"/>
<dbReference type="Pharos" id="P25490">
    <property type="development level" value="Tbio"/>
</dbReference>
<dbReference type="PRO" id="PR:P25490"/>
<dbReference type="Proteomes" id="UP000005640">
    <property type="component" value="Chromosome 14"/>
</dbReference>
<dbReference type="RNAct" id="P25490">
    <property type="molecule type" value="protein"/>
</dbReference>
<dbReference type="Bgee" id="ENSG00000100811">
    <property type="expression patterns" value="Expressed in ventricular zone and 183 other cell types or tissues"/>
</dbReference>
<dbReference type="ExpressionAtlas" id="P25490">
    <property type="expression patterns" value="baseline and differential"/>
</dbReference>
<dbReference type="GO" id="GO:0000785">
    <property type="term" value="C:chromatin"/>
    <property type="evidence" value="ECO:0000318"/>
    <property type="project" value="GO_Central"/>
</dbReference>
<dbReference type="GO" id="GO:0005677">
    <property type="term" value="C:chromatin silencing complex"/>
    <property type="evidence" value="ECO:0007669"/>
    <property type="project" value="Ensembl"/>
</dbReference>
<dbReference type="GO" id="GO:0031011">
    <property type="term" value="C:Ino80 complex"/>
    <property type="evidence" value="ECO:0000314"/>
    <property type="project" value="UniProtKB"/>
</dbReference>
<dbReference type="GO" id="GO:0016363">
    <property type="term" value="C:nuclear matrix"/>
    <property type="evidence" value="ECO:0007669"/>
    <property type="project" value="UniProtKB-SubCell"/>
</dbReference>
<dbReference type="GO" id="GO:0005654">
    <property type="term" value="C:nucleoplasm"/>
    <property type="evidence" value="ECO:0000304"/>
    <property type="project" value="Reactome"/>
</dbReference>
<dbReference type="GO" id="GO:0005634">
    <property type="term" value="C:nucleus"/>
    <property type="evidence" value="ECO:0000314"/>
    <property type="project" value="UniProtKB"/>
</dbReference>
<dbReference type="GO" id="GO:0031519">
    <property type="term" value="C:PcG protein complex"/>
    <property type="evidence" value="ECO:0000318"/>
    <property type="project" value="GO_Central"/>
</dbReference>
<dbReference type="GO" id="GO:0005667">
    <property type="term" value="C:transcription regulator complex"/>
    <property type="evidence" value="ECO:0000318"/>
    <property type="project" value="GO_Central"/>
</dbReference>
<dbReference type="GO" id="GO:0003682">
    <property type="term" value="F:chromatin binding"/>
    <property type="evidence" value="ECO:0007669"/>
    <property type="project" value="Ensembl"/>
</dbReference>
<dbReference type="GO" id="GO:0000987">
    <property type="term" value="F:cis-regulatory region sequence-specific DNA binding"/>
    <property type="evidence" value="ECO:0000314"/>
    <property type="project" value="UniProtKB"/>
</dbReference>
<dbReference type="GO" id="GO:0003677">
    <property type="term" value="F:DNA binding"/>
    <property type="evidence" value="ECO:0000314"/>
    <property type="project" value="MGI"/>
</dbReference>
<dbReference type="GO" id="GO:0001228">
    <property type="term" value="F:DNA-binding transcription activator activity, RNA polymerase II-specific"/>
    <property type="evidence" value="ECO:0000314"/>
    <property type="project" value="BHF-UCL"/>
</dbReference>
<dbReference type="GO" id="GO:0000981">
    <property type="term" value="F:DNA-binding transcription factor activity, RNA polymerase II-specific"/>
    <property type="evidence" value="ECO:0000314"/>
    <property type="project" value="UniProt"/>
</dbReference>
<dbReference type="GO" id="GO:0140297">
    <property type="term" value="F:DNA-binding transcription factor binding"/>
    <property type="evidence" value="ECO:0000353"/>
    <property type="project" value="UniProtKB"/>
</dbReference>
<dbReference type="GO" id="GO:0001217">
    <property type="term" value="F:DNA-binding transcription repressor activity"/>
    <property type="evidence" value="ECO:0000304"/>
    <property type="project" value="GO_Central"/>
</dbReference>
<dbReference type="GO" id="GO:0001227">
    <property type="term" value="F:DNA-binding transcription repressor activity, RNA polymerase II-specific"/>
    <property type="evidence" value="ECO:0000314"/>
    <property type="project" value="GO_Central"/>
</dbReference>
<dbReference type="GO" id="GO:0000400">
    <property type="term" value="F:four-way junction DNA binding"/>
    <property type="evidence" value="ECO:0000314"/>
    <property type="project" value="UniProtKB"/>
</dbReference>
<dbReference type="GO" id="GO:0003723">
    <property type="term" value="F:RNA binding"/>
    <property type="evidence" value="ECO:0000314"/>
    <property type="project" value="MGI"/>
</dbReference>
<dbReference type="GO" id="GO:0000978">
    <property type="term" value="F:RNA polymerase II cis-regulatory region sequence-specific DNA binding"/>
    <property type="evidence" value="ECO:0000314"/>
    <property type="project" value="BHF-UCL"/>
</dbReference>
<dbReference type="GO" id="GO:1990837">
    <property type="term" value="F:sequence-specific double-stranded DNA binding"/>
    <property type="evidence" value="ECO:0000314"/>
    <property type="project" value="ARUK-UCL"/>
</dbReference>
<dbReference type="GO" id="GO:0046332">
    <property type="term" value="F:SMAD binding"/>
    <property type="evidence" value="ECO:0000315"/>
    <property type="project" value="AgBase"/>
</dbReference>
<dbReference type="GO" id="GO:0000976">
    <property type="term" value="F:transcription cis-regulatory region binding"/>
    <property type="evidence" value="ECO:0000314"/>
    <property type="project" value="MGI"/>
</dbReference>
<dbReference type="GO" id="GO:0008270">
    <property type="term" value="F:zinc ion binding"/>
    <property type="evidence" value="ECO:0007669"/>
    <property type="project" value="UniProtKB-KW"/>
</dbReference>
<dbReference type="GO" id="GO:0009952">
    <property type="term" value="P:anterior/posterior pattern specification"/>
    <property type="evidence" value="ECO:0007669"/>
    <property type="project" value="Ensembl"/>
</dbReference>
<dbReference type="GO" id="GO:0030183">
    <property type="term" value="P:B cell differentiation"/>
    <property type="evidence" value="ECO:0007669"/>
    <property type="project" value="Ensembl"/>
</dbReference>
<dbReference type="GO" id="GO:0048593">
    <property type="term" value="P:camera-type eye morphogenesis"/>
    <property type="evidence" value="ECO:0007669"/>
    <property type="project" value="Ensembl"/>
</dbReference>
<dbReference type="GO" id="GO:0071347">
    <property type="term" value="P:cellular response to interleukin-1"/>
    <property type="evidence" value="ECO:0007669"/>
    <property type="project" value="Ensembl"/>
</dbReference>
<dbReference type="GO" id="GO:0034644">
    <property type="term" value="P:cellular response to UV"/>
    <property type="evidence" value="ECO:0000315"/>
    <property type="project" value="UniProtKB"/>
</dbReference>
<dbReference type="GO" id="GO:0006338">
    <property type="term" value="P:chromatin remodeling"/>
    <property type="evidence" value="ECO:0000314"/>
    <property type="project" value="ComplexPortal"/>
</dbReference>
<dbReference type="GO" id="GO:0006974">
    <property type="term" value="P:DNA damage response"/>
    <property type="evidence" value="ECO:0000315"/>
    <property type="project" value="UniProtKB"/>
</dbReference>
<dbReference type="GO" id="GO:0000724">
    <property type="term" value="P:double-strand break repair via homologous recombination"/>
    <property type="evidence" value="ECO:0000315"/>
    <property type="project" value="UniProtKB"/>
</dbReference>
<dbReference type="GO" id="GO:0071707">
    <property type="term" value="P:immunoglobulin heavy chain V-D-J recombination"/>
    <property type="evidence" value="ECO:0007669"/>
    <property type="project" value="Ensembl"/>
</dbReference>
<dbReference type="GO" id="GO:0061052">
    <property type="term" value="P:negative regulation of cell growth involved in cardiac muscle cell development"/>
    <property type="evidence" value="ECO:0007669"/>
    <property type="project" value="Ensembl"/>
</dbReference>
<dbReference type="GO" id="GO:0010629">
    <property type="term" value="P:negative regulation of gene expression"/>
    <property type="evidence" value="ECO:0000315"/>
    <property type="project" value="CACAO"/>
</dbReference>
<dbReference type="GO" id="GO:0032688">
    <property type="term" value="P:negative regulation of interferon-beta production"/>
    <property type="evidence" value="ECO:0000314"/>
    <property type="project" value="UniProtKB"/>
</dbReference>
<dbReference type="GO" id="GO:1902894">
    <property type="term" value="P:negative regulation of miRNA transcription"/>
    <property type="evidence" value="ECO:0007669"/>
    <property type="project" value="Ensembl"/>
</dbReference>
<dbReference type="GO" id="GO:0000122">
    <property type="term" value="P:negative regulation of transcription by RNA polymerase II"/>
    <property type="evidence" value="ECO:0000314"/>
    <property type="project" value="UniProtKB"/>
</dbReference>
<dbReference type="GO" id="GO:0045739">
    <property type="term" value="P:positive regulation of DNA repair"/>
    <property type="evidence" value="ECO:0000266"/>
    <property type="project" value="ComplexPortal"/>
</dbReference>
<dbReference type="GO" id="GO:0045893">
    <property type="term" value="P:positive regulation of DNA-templated transcription"/>
    <property type="evidence" value="ECO:0000315"/>
    <property type="project" value="ComplexPortal"/>
</dbReference>
<dbReference type="GO" id="GO:0010628">
    <property type="term" value="P:positive regulation of gene expression"/>
    <property type="evidence" value="ECO:0007669"/>
    <property type="project" value="Ensembl"/>
</dbReference>
<dbReference type="GO" id="GO:1904507">
    <property type="term" value="P:positive regulation of telomere maintenance in response to DNA damage"/>
    <property type="evidence" value="ECO:0000266"/>
    <property type="project" value="ComplexPortal"/>
</dbReference>
<dbReference type="GO" id="GO:0045944">
    <property type="term" value="P:positive regulation of transcription by RNA polymerase II"/>
    <property type="evidence" value="ECO:0000305"/>
    <property type="project" value="BHF-UCL"/>
</dbReference>
<dbReference type="GO" id="GO:0051726">
    <property type="term" value="P:regulation of cell cycle"/>
    <property type="evidence" value="ECO:0000315"/>
    <property type="project" value="ComplexPortal"/>
</dbReference>
<dbReference type="GO" id="GO:0033044">
    <property type="term" value="P:regulation of chromosome organization"/>
    <property type="evidence" value="ECO:0000315"/>
    <property type="project" value="ComplexPortal"/>
</dbReference>
<dbReference type="GO" id="GO:0006282">
    <property type="term" value="P:regulation of DNA repair"/>
    <property type="evidence" value="ECO:0000266"/>
    <property type="project" value="ComplexPortal"/>
</dbReference>
<dbReference type="GO" id="GO:0006275">
    <property type="term" value="P:regulation of DNA replication"/>
    <property type="evidence" value="ECO:0000315"/>
    <property type="project" value="ComplexPortal"/>
</dbReference>
<dbReference type="GO" id="GO:0060382">
    <property type="term" value="P:regulation of DNA strand elongation"/>
    <property type="evidence" value="ECO:0000315"/>
    <property type="project" value="ComplexPortal"/>
</dbReference>
<dbReference type="GO" id="GO:0045995">
    <property type="term" value="P:regulation of embryonic development"/>
    <property type="evidence" value="ECO:0000266"/>
    <property type="project" value="ComplexPortal"/>
</dbReference>
<dbReference type="GO" id="GO:0006357">
    <property type="term" value="P:regulation of transcription by RNA polymerase II"/>
    <property type="evidence" value="ECO:0000314"/>
    <property type="project" value="UniProt"/>
</dbReference>
<dbReference type="GO" id="GO:0034696">
    <property type="term" value="P:response to prostaglandin F"/>
    <property type="evidence" value="ECO:0007669"/>
    <property type="project" value="Ensembl"/>
</dbReference>
<dbReference type="GO" id="GO:0010225">
    <property type="term" value="P:response to UV-C"/>
    <property type="evidence" value="ECO:0000315"/>
    <property type="project" value="UniProtKB"/>
</dbReference>
<dbReference type="GO" id="GO:0006403">
    <property type="term" value="P:RNA localization"/>
    <property type="evidence" value="ECO:0007669"/>
    <property type="project" value="Ensembl"/>
</dbReference>
<dbReference type="GO" id="GO:0007283">
    <property type="term" value="P:spermatogenesis"/>
    <property type="evidence" value="ECO:0007669"/>
    <property type="project" value="UniProtKB-KW"/>
</dbReference>
<dbReference type="GO" id="GO:0000723">
    <property type="term" value="P:telomere maintenance"/>
    <property type="evidence" value="ECO:0000266"/>
    <property type="project" value="ComplexPortal"/>
</dbReference>
<dbReference type="DisProt" id="DP02595"/>
<dbReference type="FunFam" id="3.30.160.60:FF:000104">
    <property type="entry name" value="Transcriptional repressor protein YY1"/>
    <property type="match status" value="1"/>
</dbReference>
<dbReference type="FunFam" id="3.30.160.60:FF:000109">
    <property type="entry name" value="Transcriptional repressor protein YY1"/>
    <property type="match status" value="1"/>
</dbReference>
<dbReference type="FunFam" id="3.30.160.60:FF:000174">
    <property type="entry name" value="Transcriptional repressor protein YY1"/>
    <property type="match status" value="1"/>
</dbReference>
<dbReference type="FunFam" id="3.30.160.60:FF:000163">
    <property type="entry name" value="transcriptional repressor protein YY1"/>
    <property type="match status" value="1"/>
</dbReference>
<dbReference type="Gene3D" id="3.30.160.60">
    <property type="entry name" value="Classic Zinc Finger"/>
    <property type="match status" value="4"/>
</dbReference>
<dbReference type="IDEAL" id="IID00234"/>
<dbReference type="InterPro" id="IPR017114">
    <property type="entry name" value="YY1-like"/>
</dbReference>
<dbReference type="InterPro" id="IPR036236">
    <property type="entry name" value="Znf_C2H2_sf"/>
</dbReference>
<dbReference type="InterPro" id="IPR013087">
    <property type="entry name" value="Znf_C2H2_type"/>
</dbReference>
<dbReference type="PANTHER" id="PTHR14003">
    <property type="entry name" value="TRANSCRIPTIONAL REPRESSOR PROTEIN YY"/>
    <property type="match status" value="1"/>
</dbReference>
<dbReference type="PANTHER" id="PTHR14003:SF10">
    <property type="entry name" value="TRANSCRIPTIONAL REPRESSOR PROTEIN YY1"/>
    <property type="match status" value="1"/>
</dbReference>
<dbReference type="Pfam" id="PF00096">
    <property type="entry name" value="zf-C2H2"/>
    <property type="match status" value="4"/>
</dbReference>
<dbReference type="PIRSF" id="PIRSF037113">
    <property type="entry name" value="TF_Yin_yang"/>
    <property type="match status" value="1"/>
</dbReference>
<dbReference type="SMART" id="SM00355">
    <property type="entry name" value="ZnF_C2H2"/>
    <property type="match status" value="4"/>
</dbReference>
<dbReference type="SUPFAM" id="SSF57667">
    <property type="entry name" value="beta-beta-alpha zinc fingers"/>
    <property type="match status" value="3"/>
</dbReference>
<dbReference type="PROSITE" id="PS00028">
    <property type="entry name" value="ZINC_FINGER_C2H2_1"/>
    <property type="match status" value="4"/>
</dbReference>
<dbReference type="PROSITE" id="PS50157">
    <property type="entry name" value="ZINC_FINGER_C2H2_2"/>
    <property type="match status" value="4"/>
</dbReference>
<organism>
    <name type="scientific">Homo sapiens</name>
    <name type="common">Human</name>
    <dbReference type="NCBI Taxonomy" id="9606"/>
    <lineage>
        <taxon>Eukaryota</taxon>
        <taxon>Metazoa</taxon>
        <taxon>Chordata</taxon>
        <taxon>Craniata</taxon>
        <taxon>Vertebrata</taxon>
        <taxon>Euteleostomi</taxon>
        <taxon>Mammalia</taxon>
        <taxon>Eutheria</taxon>
        <taxon>Euarchontoglires</taxon>
        <taxon>Primates</taxon>
        <taxon>Haplorrhini</taxon>
        <taxon>Catarrhini</taxon>
        <taxon>Hominidae</taxon>
        <taxon>Homo</taxon>
    </lineage>
</organism>
<gene>
    <name type="primary">YY1</name>
    <name type="synonym">INO80S</name>
</gene>
<keyword id="KW-0002">3D-structure</keyword>
<keyword id="KW-0010">Activator</keyword>
<keyword id="KW-0013">ADP-ribosylation</keyword>
<keyword id="KW-0221">Differentiation</keyword>
<keyword id="KW-0903">Direct protein sequencing</keyword>
<keyword id="KW-0225">Disease variant</keyword>
<keyword id="KW-0227">DNA damage</keyword>
<keyword id="KW-0233">DNA recombination</keyword>
<keyword id="KW-0234">DNA repair</keyword>
<keyword id="KW-0238">DNA-binding</keyword>
<keyword id="KW-0991">Intellectual disability</keyword>
<keyword id="KW-1017">Isopeptide bond</keyword>
<keyword id="KW-0479">Metal-binding</keyword>
<keyword id="KW-0539">Nucleus</keyword>
<keyword id="KW-0597">Phosphoprotein</keyword>
<keyword id="KW-1267">Proteomics identification</keyword>
<keyword id="KW-1185">Reference proteome</keyword>
<keyword id="KW-0677">Repeat</keyword>
<keyword id="KW-0678">Repressor</keyword>
<keyword id="KW-0744">Spermatogenesis</keyword>
<keyword id="KW-0804">Transcription</keyword>
<keyword id="KW-0805">Transcription regulation</keyword>
<keyword id="KW-0832">Ubl conjugation</keyword>
<keyword id="KW-0862">Zinc</keyword>
<keyword id="KW-0863">Zinc-finger</keyword>
<evidence type="ECO:0000250" key="1">
    <source>
        <dbReference type="UniProtKB" id="Q00899"/>
    </source>
</evidence>
<evidence type="ECO:0000255" key="2">
    <source>
        <dbReference type="PROSITE-ProRule" id="PRU00042"/>
    </source>
</evidence>
<evidence type="ECO:0000256" key="3">
    <source>
        <dbReference type="SAM" id="MobiDB-lite"/>
    </source>
</evidence>
<evidence type="ECO:0000269" key="4">
    <source>
    </source>
</evidence>
<evidence type="ECO:0000269" key="5">
    <source>
    </source>
</evidence>
<evidence type="ECO:0000269" key="6">
    <source>
    </source>
</evidence>
<evidence type="ECO:0000269" key="7">
    <source>
    </source>
</evidence>
<evidence type="ECO:0000269" key="8">
    <source>
    </source>
</evidence>
<evidence type="ECO:0000269" key="9">
    <source>
    </source>
</evidence>
<evidence type="ECO:0000269" key="10">
    <source>
    </source>
</evidence>
<evidence type="ECO:0000269" key="11">
    <source>
    </source>
</evidence>
<evidence type="ECO:0000269" key="12">
    <source>
    </source>
</evidence>
<evidence type="ECO:0000269" key="13">
    <source>
    </source>
</evidence>
<evidence type="ECO:0000269" key="14">
    <source>
    </source>
</evidence>
<evidence type="ECO:0000269" key="15">
    <source>
    </source>
</evidence>
<evidence type="ECO:0000269" key="16">
    <source>
    </source>
</evidence>
<evidence type="ECO:0000269" key="17">
    <source>
    </source>
</evidence>
<evidence type="ECO:0000269" key="18">
    <source>
    </source>
</evidence>
<evidence type="ECO:0000269" key="19">
    <source>
    </source>
</evidence>
<evidence type="ECO:0000269" key="20">
    <source>
    </source>
</evidence>
<evidence type="ECO:0000269" key="21">
    <source>
    </source>
</evidence>
<evidence type="ECO:0000269" key="22">
    <source>
    </source>
</evidence>
<evidence type="ECO:0000269" key="23">
    <source>
    </source>
</evidence>
<evidence type="ECO:0000305" key="24"/>
<evidence type="ECO:0007744" key="25">
    <source>
        <dbReference type="PDB" id="1UBD"/>
    </source>
</evidence>
<evidence type="ECO:0007744" key="26">
    <source>
    </source>
</evidence>
<evidence type="ECO:0007744" key="27">
    <source>
    </source>
</evidence>
<evidence type="ECO:0007744" key="28">
    <source>
    </source>
</evidence>
<evidence type="ECO:0007744" key="29">
    <source>
    </source>
</evidence>
<evidence type="ECO:0007744" key="30">
    <source>
    </source>
</evidence>
<evidence type="ECO:0007744" key="31">
    <source>
    </source>
</evidence>
<evidence type="ECO:0007744" key="32">
    <source>
    </source>
</evidence>
<evidence type="ECO:0007744" key="33">
    <source>
    </source>
</evidence>
<evidence type="ECO:0007744" key="34">
    <source>
    </source>
</evidence>
<evidence type="ECO:0007744" key="35">
    <source>
    </source>
</evidence>
<evidence type="ECO:0007744" key="36">
    <source>
    </source>
</evidence>
<evidence type="ECO:0007829" key="37">
    <source>
        <dbReference type="PDB" id="1UBD"/>
    </source>
</evidence>
<evidence type="ECO:0007829" key="38">
    <source>
        <dbReference type="PDB" id="1ZNM"/>
    </source>
</evidence>
<evidence type="ECO:0007829" key="39">
    <source>
        <dbReference type="PDB" id="4C5I"/>
    </source>
</evidence>
<proteinExistence type="evidence at protein level"/>
<accession>P25490</accession>
<accession>Q14935</accession>
<feature type="chain" id="PRO_0000047190" description="Transcriptional repressor protein YY1">
    <location>
        <begin position="1"/>
        <end position="414"/>
    </location>
</feature>
<feature type="zinc finger region" description="C2H2-type 1" evidence="2">
    <location>
        <begin position="296"/>
        <end position="320"/>
    </location>
</feature>
<feature type="zinc finger region" description="C2H2-type 2" evidence="2">
    <location>
        <begin position="325"/>
        <end position="347"/>
    </location>
</feature>
<feature type="zinc finger region" description="C2H2-type 3" evidence="2">
    <location>
        <begin position="353"/>
        <end position="377"/>
    </location>
</feature>
<feature type="zinc finger region" description="C2H2-type 4" evidence="2">
    <location>
        <begin position="383"/>
        <end position="407"/>
    </location>
</feature>
<feature type="region of interest" description="Interaction with the SMAD1/SMAD4 complex" evidence="6">
    <location>
        <begin position="1"/>
        <end position="170"/>
    </location>
</feature>
<feature type="region of interest" description="Disordered" evidence="3">
    <location>
        <begin position="33"/>
        <end position="81"/>
    </location>
</feature>
<feature type="region of interest" description="Gly-rich region involved in interaction with HCFC1" evidence="13">
    <location>
        <begin position="116"/>
        <end position="260"/>
    </location>
</feature>
<feature type="region of interest" description="Disordered" evidence="3">
    <location>
        <begin position="157"/>
        <end position="203"/>
    </location>
</feature>
<feature type="region of interest" description="Involved in nuclear matrix association" evidence="23">
    <location>
        <begin position="257"/>
        <end position="341"/>
    </location>
</feature>
<feature type="region of interest" description="Binding to DNA" evidence="11">
    <location>
        <begin position="295"/>
        <end position="414"/>
    </location>
</feature>
<feature type="region of interest" description="Involved in repression of activated transcription">
    <location>
        <begin position="333"/>
        <end position="371"/>
    </location>
</feature>
<feature type="region of interest" description="Involved in masking transactivation domain">
    <location>
        <begin position="371"/>
        <end position="397"/>
    </location>
</feature>
<feature type="compositionally biased region" description="Acidic residues" evidence="3">
    <location>
        <begin position="42"/>
        <end position="55"/>
    </location>
</feature>
<feature type="compositionally biased region" description="Gly residues" evidence="3">
    <location>
        <begin position="57"/>
        <end position="66"/>
    </location>
</feature>
<feature type="compositionally biased region" description="Basic residues" evidence="3">
    <location>
        <begin position="67"/>
        <end position="81"/>
    </location>
</feature>
<feature type="compositionally biased region" description="Gly residues" evidence="3">
    <location>
        <begin position="158"/>
        <end position="170"/>
    </location>
</feature>
<feature type="compositionally biased region" description="Basic residues" evidence="3">
    <location>
        <begin position="171"/>
        <end position="182"/>
    </location>
</feature>
<feature type="compositionally biased region" description="Gly residues" evidence="3">
    <location>
        <begin position="188"/>
        <end position="199"/>
    </location>
</feature>
<feature type="binding site" evidence="21 25">
    <location>
        <position position="298"/>
    </location>
    <ligand>
        <name>Zn(2+)</name>
        <dbReference type="ChEBI" id="CHEBI:29105"/>
        <label>1</label>
    </ligand>
</feature>
<feature type="binding site" evidence="21 25">
    <location>
        <position position="303"/>
    </location>
    <ligand>
        <name>Zn(2+)</name>
        <dbReference type="ChEBI" id="CHEBI:29105"/>
        <label>1</label>
    </ligand>
</feature>
<feature type="binding site" evidence="21 25">
    <location>
        <position position="316"/>
    </location>
    <ligand>
        <name>Zn(2+)</name>
        <dbReference type="ChEBI" id="CHEBI:29105"/>
        <label>1</label>
    </ligand>
</feature>
<feature type="binding site" evidence="21 25">
    <location>
        <position position="320"/>
    </location>
    <ligand>
        <name>Zn(2+)</name>
        <dbReference type="ChEBI" id="CHEBI:29105"/>
        <label>1</label>
    </ligand>
</feature>
<feature type="binding site" evidence="21 25">
    <location>
        <position position="327"/>
    </location>
    <ligand>
        <name>Zn(2+)</name>
        <dbReference type="ChEBI" id="CHEBI:29105"/>
        <label>2</label>
    </ligand>
</feature>
<feature type="binding site" evidence="21 25">
    <location>
        <position position="330"/>
    </location>
    <ligand>
        <name>Zn(2+)</name>
        <dbReference type="ChEBI" id="CHEBI:29105"/>
        <label>2</label>
    </ligand>
</feature>
<feature type="binding site" evidence="21 25">
    <location>
        <position position="343"/>
    </location>
    <ligand>
        <name>Zn(2+)</name>
        <dbReference type="ChEBI" id="CHEBI:29105"/>
        <label>2</label>
    </ligand>
</feature>
<feature type="binding site" evidence="21 25">
    <location>
        <position position="347"/>
    </location>
    <ligand>
        <name>Zn(2+)</name>
        <dbReference type="ChEBI" id="CHEBI:29105"/>
        <label>2</label>
    </ligand>
</feature>
<feature type="binding site" evidence="21 25">
    <location>
        <position position="355"/>
    </location>
    <ligand>
        <name>Zn(2+)</name>
        <dbReference type="ChEBI" id="CHEBI:29105"/>
        <label>3</label>
    </ligand>
</feature>
<feature type="binding site" evidence="21 25">
    <location>
        <position position="360"/>
    </location>
    <ligand>
        <name>Zn(2+)</name>
        <dbReference type="ChEBI" id="CHEBI:29105"/>
        <label>3</label>
    </ligand>
</feature>
<feature type="binding site" evidence="21 25">
    <location>
        <position position="373"/>
    </location>
    <ligand>
        <name>Zn(2+)</name>
        <dbReference type="ChEBI" id="CHEBI:29105"/>
        <label>3</label>
    </ligand>
</feature>
<feature type="binding site" evidence="21 25">
    <location>
        <position position="377"/>
    </location>
    <ligand>
        <name>Zn(2+)</name>
        <dbReference type="ChEBI" id="CHEBI:29105"/>
        <label>3</label>
    </ligand>
</feature>
<feature type="binding site" evidence="21 25">
    <location>
        <position position="385"/>
    </location>
    <ligand>
        <name>Zn(2+)</name>
        <dbReference type="ChEBI" id="CHEBI:29105"/>
        <label>4</label>
    </ligand>
</feature>
<feature type="binding site" evidence="21 25">
    <location>
        <position position="390"/>
    </location>
    <ligand>
        <name>Zn(2+)</name>
        <dbReference type="ChEBI" id="CHEBI:29105"/>
        <label>4</label>
    </ligand>
</feature>
<feature type="binding site" evidence="21 25">
    <location>
        <position position="403"/>
    </location>
    <ligand>
        <name>Zn(2+)</name>
        <dbReference type="ChEBI" id="CHEBI:29105"/>
        <label>4</label>
    </ligand>
</feature>
<feature type="binding site" evidence="21 25">
    <location>
        <position position="407"/>
    </location>
    <ligand>
        <name>Zn(2+)</name>
        <dbReference type="ChEBI" id="CHEBI:29105"/>
        <label>4</label>
    </ligand>
</feature>
<feature type="site" description="Cleavage; by caspase-7" evidence="16">
    <location>
        <begin position="119"/>
        <end position="120"/>
    </location>
</feature>
<feature type="modified residue" description="Phosphoserine; by CK2" evidence="16 28 29 30 31 32">
    <location>
        <position position="118"/>
    </location>
</feature>
<feature type="modified residue" description="Phosphoserine" evidence="31">
    <location>
        <position position="187"/>
    </location>
</feature>
<feature type="modified residue" description="Phosphoserine" evidence="26 27 28 31 32">
    <location>
        <position position="247"/>
    </location>
</feature>
<feature type="modified residue" description="Phosphothreonine" evidence="26">
    <location>
        <position position="378"/>
    </location>
</feature>
<feature type="cross-link" description="Glycyl lysine isopeptide (Lys-Gly) (interchain with G-Cter in SUMO2)" evidence="36">
    <location>
        <position position="182"/>
    </location>
</feature>
<feature type="cross-link" description="Glycyl lysine isopeptide (Lys-Gly) (interchain with G-Cter in SUMO2)" evidence="33 36">
    <location>
        <position position="183"/>
    </location>
</feature>
<feature type="cross-link" description="Glycyl lysine isopeptide (Lys-Gly) (interchain with G-Cter in SUMO2)" evidence="36">
    <location>
        <position position="208"/>
    </location>
</feature>
<feature type="cross-link" description="Glycyl lysine isopeptide (Lys-Gly) (interchain with G-Cter in SUMO2)" evidence="36">
    <location>
        <position position="230"/>
    </location>
</feature>
<feature type="cross-link" description="Glycyl lysine isopeptide (Lys-Gly) (interchain with G-Cter in SUMO2)" evidence="33 36">
    <location>
        <position position="286"/>
    </location>
</feature>
<feature type="cross-link" description="Glycyl lysine isopeptide (Lys-Gly) (interchain with G-Cter in SUMO2)" evidence="33 34 35 36">
    <location>
        <position position="288"/>
    </location>
</feature>
<feature type="cross-link" description="Glycyl lysine isopeptide (Lys-Gly) (interchain with G-Cter in SUMO2)" evidence="36">
    <location>
        <position position="409"/>
    </location>
</feature>
<feature type="cross-link" description="Glycyl lysine isopeptide (Lys-Gly) (interchain with G-Cter in SUMO2)" evidence="36">
    <location>
        <position position="411"/>
    </location>
</feature>
<feature type="sequence variant" id="VAR_079202" description="In GADEVS." evidence="20">
    <location>
        <begin position="179"/>
        <end position="414"/>
    </location>
</feature>
<feature type="sequence variant" id="VAR_079203" description="In GADEVS; uncertain significance." evidence="20">
    <original>H</original>
    <variation>Y</variation>
    <location>
        <position position="320"/>
    </location>
</feature>
<feature type="sequence variant" id="VAR_079204" description="In GADEVS; uncertain significance; dbSNP:rs1555370868." evidence="20">
    <original>K</original>
    <variation>Q</variation>
    <location>
        <position position="339"/>
    </location>
</feature>
<feature type="sequence variant" id="VAR_079205" description="In GADEVS." evidence="20">
    <location>
        <begin position="344"/>
        <end position="414"/>
    </location>
</feature>
<feature type="sequence variant" id="VAR_079206" description="In GADEVS; reduced DNA-binding; reduced transcription regulator activity; dbSNP:rs1131692163." evidence="20">
    <original>L</original>
    <variation>P</variation>
    <location>
        <position position="366"/>
    </location>
</feature>
<feature type="sequence variant" id="VAR_079207" description="In GADEVS; uncertain significance; dbSNP:rs1131692044." evidence="20">
    <original>L</original>
    <variation>V</variation>
    <location>
        <position position="366"/>
    </location>
</feature>
<feature type="sequence variant" id="VAR_074172" description="Found in patients with late onset insulinomas; alters DNA-binding motif; increases transactivation activity; produces a constitutive activation of cAMP and Ca2+ signaling pathways involved in insulin secretion; dbSNP:rs386834266." evidence="18 19">
    <original>T</original>
    <variation>R</variation>
    <location>
        <position position="372"/>
    </location>
</feature>
<feature type="sequence variant" id="VAR_065086" description="In GADEVS; reduced DNA-binding; reduced transcription regulator activity; dbSNP:rs1131692043." evidence="14 20">
    <original>D</original>
    <variation>Y</variation>
    <location>
        <position position="380"/>
    </location>
</feature>
<feature type="sequence variant" id="VAR_079208" description="In GADEVS; uncertain significance." evidence="20">
    <location>
        <position position="393"/>
    </location>
</feature>
<feature type="mutagenesis site" description="Abolished phosphorylation by CK2, leading to increased cleavage by caspase-7 (CASP7)." evidence="16">
    <original>S</original>
    <variation>A</variation>
    <location>
        <position position="118"/>
    </location>
</feature>
<feature type="sequence conflict" description="In Ref. 2; AAA59926." evidence="24" ref="2">
    <original>H</original>
    <variation>R</variation>
    <location>
        <position position="65"/>
    </location>
</feature>
<feature type="sequence conflict" description="In Ref. 1; AAA59467." evidence="24" ref="1">
    <original>G</original>
    <variation>R</variation>
    <location>
        <position position="196"/>
    </location>
</feature>
<feature type="strand" evidence="39">
    <location>
        <begin position="207"/>
        <end position="211"/>
    </location>
</feature>
<feature type="strand" evidence="39">
    <location>
        <begin position="220"/>
        <end position="224"/>
    </location>
</feature>
<feature type="strand" evidence="37">
    <location>
        <begin position="306"/>
        <end position="309"/>
    </location>
</feature>
<feature type="helix" evidence="37">
    <location>
        <begin position="310"/>
        <end position="317"/>
    </location>
</feature>
<feature type="helix" evidence="37">
    <location>
        <begin position="318"/>
        <end position="320"/>
    </location>
</feature>
<feature type="turn" evidence="37">
    <location>
        <begin position="328"/>
        <end position="330"/>
    </location>
</feature>
<feature type="strand" evidence="37">
    <location>
        <begin position="333"/>
        <end position="336"/>
    </location>
</feature>
<feature type="helix" evidence="37">
    <location>
        <begin position="337"/>
        <end position="343"/>
    </location>
</feature>
<feature type="helix" evidence="37">
    <location>
        <begin position="344"/>
        <end position="346"/>
    </location>
</feature>
<feature type="turn" evidence="38">
    <location>
        <begin position="358"/>
        <end position="360"/>
    </location>
</feature>
<feature type="strand" evidence="37">
    <location>
        <begin position="363"/>
        <end position="365"/>
    </location>
</feature>
<feature type="helix" evidence="37">
    <location>
        <begin position="367"/>
        <end position="378"/>
    </location>
</feature>
<feature type="turn" evidence="37">
    <location>
        <begin position="397"/>
        <end position="400"/>
    </location>
</feature>
<feature type="helix" evidence="37">
    <location>
        <begin position="401"/>
        <end position="407"/>
    </location>
</feature>
<reference key="1">
    <citation type="journal article" date="1991" name="Cell">
        <title>Transcriptional repression by YY1, a human GLI-Kruppel-related protein, and relief of repression by adenovirus E1A protein.</title>
        <authorList>
            <person name="Shi Y."/>
            <person name="Seto E."/>
            <person name="Chang L.-S."/>
            <person name="Shenk T."/>
        </authorList>
    </citation>
    <scope>NUCLEOTIDE SEQUENCE [MRNA]</scope>
    <scope>PARTIAL PROTEIN SEQUENCE</scope>
    <scope>FUNCTION</scope>
</reference>
<reference key="2">
    <citation type="journal article" date="1991" name="Proc. Natl. Acad. Sci. U.S.A.">
        <title>Isolation of a candidate repressor/activator, NF-E1 (YY-1, delta), that binds to the immunoglobulin kappa 3' enhancer and the immunoglobulin heavy-chain mu E1 site.</title>
        <authorList>
            <person name="Park K."/>
            <person name="Atchison M."/>
        </authorList>
    </citation>
    <scope>NUCLEOTIDE SEQUENCE [MRNA]</scope>
    <source>
        <tissue>Foreskin</tissue>
    </source>
</reference>
<reference key="3">
    <citation type="submission" date="1992-07" db="EMBL/GenBank/DDBJ databases">
        <authorList>
            <person name="Whitson R.H."/>
            <person name="Huang T."/>
            <person name="Dang J."/>
            <person name="Itakura K."/>
        </authorList>
    </citation>
    <scope>NUCLEOTIDE SEQUENCE [MRNA]</scope>
</reference>
<reference key="4">
    <citation type="journal article" date="2004" name="Genome Res.">
        <title>The status, quality, and expansion of the NIH full-length cDNA project: the Mammalian Gene Collection (MGC).</title>
        <authorList>
            <consortium name="The MGC Project Team"/>
        </authorList>
    </citation>
    <scope>NUCLEOTIDE SEQUENCE [LARGE SCALE MRNA]</scope>
    <source>
        <tissue>Brain</tissue>
        <tissue>Lymph</tissue>
    </source>
</reference>
<reference key="5">
    <citation type="journal article" date="1998" name="J. Cell. Biochem.">
        <title>Targeting of the YY1 transcription factor to the nucleolus and the nuclear matrix in situ: the C-terminus is a principal determinant for nuclear trafficking.</title>
        <authorList>
            <person name="McNeil S."/>
            <person name="Guo B."/>
            <person name="Stein J.L."/>
            <person name="Lian J.B."/>
            <person name="Bushmeyer S."/>
            <person name="Seto E."/>
            <person name="Atchison M.L."/>
            <person name="Penman S."/>
            <person name="van Wijnen A.J."/>
            <person name="Stein G.S."/>
        </authorList>
    </citation>
    <scope>SUBCELLULAR LOCATION</scope>
</reference>
<reference key="6">
    <citation type="journal article" date="1997" name="Nucleic Acids Res.">
        <title>Yeast two-hybrid cloning of a novel zinc finger protein that interacts with the multifunctional transcription factor YY1.</title>
        <authorList>
            <person name="Kalenik J.L."/>
            <person name="Chen D."/>
            <person name="Bradley M.E."/>
            <person name="Chen S.-J."/>
            <person name="Lee T.-C."/>
        </authorList>
    </citation>
    <scope>INTERACTION WITH YAF2</scope>
</reference>
<reference key="7">
    <citation type="journal article" date="2001" name="Biochem. Biophys. Res. Commun.">
        <title>Poly(ADP-ribosyl)ation of transcription factor Yin Yang 1 under conditions of DNA damage.</title>
        <authorList>
            <person name="Oei S.L."/>
            <person name="Shi Y."/>
        </authorList>
    </citation>
    <scope>POLY-ADP-RIBOSYLATION BY PARP1</scope>
</reference>
<reference key="8">
    <citation type="journal article" date="2001" name="Mol. Cell. Biol.">
        <title>The polycomb group protein EED interacts with YY1, and both proteins induce neural tissue in Xenopus embryos.</title>
        <authorList>
            <person name="Satijn D.P.E."/>
            <person name="Hamer K.M."/>
            <person name="den Blaauwen J."/>
            <person name="Otte A.P."/>
        </authorList>
    </citation>
    <scope>FUNCTION</scope>
    <scope>INTERACTION WITH EED AND EZH2</scope>
</reference>
<reference key="9">
    <citation type="journal article" date="2004" name="Development">
        <title>SMAD-mediated modulation of YY1 activity regulates the BMP response and cardiac-specific expression of a GATA4/5/6-dependent chick Nkx2.5 enhancer.</title>
        <authorList>
            <person name="Lee K.H."/>
            <person name="Evans S."/>
            <person name="Ruan T.Y."/>
            <person name="Lassar A.B."/>
        </authorList>
    </citation>
    <scope>DNA-BINDING</scope>
    <scope>IDENTIFICATION IN A COMPLEX WITH SMAD1 AND SMAD4</scope>
    <scope>FUNCTION</scope>
</reference>
<reference key="10">
    <citation type="journal article" date="2006" name="Oncogene">
        <title>Transcription factor YY1: structure, function, and therapeutic implications in cancer biology.</title>
        <authorList>
            <person name="Gordon S."/>
            <person name="Akopyan G."/>
            <person name="Garban H."/>
            <person name="Bonavida B."/>
        </authorList>
    </citation>
    <scope>REVIEW ON FUNCTION</scope>
</reference>
<reference key="11">
    <citation type="journal article" date="2007" name="Nat. Struct. Mol. Biol.">
        <title>YY1 functions with INO80 to activate transcription.</title>
        <authorList>
            <person name="Cai Y."/>
            <person name="Jin J."/>
            <person name="Yao T."/>
            <person name="Gottschalk A.J."/>
            <person name="Swanson S.K."/>
            <person name="Wu S."/>
            <person name="Shi Y."/>
            <person name="Washburn M.P."/>
            <person name="Florens L."/>
            <person name="Conaway R.C."/>
            <person name="Conaway J.W."/>
        </authorList>
    </citation>
    <scope>FUNCTION</scope>
    <scope>IDENTIFICATION IN THE INO80 COMPLEX</scope>
</reference>
<reference key="12">
    <citation type="journal article" date="2007" name="Nat. Struct. Mol. Biol.">
        <title>A YY1-INO80 complex regulates genomic stability through homologous recombination-based repair.</title>
        <authorList>
            <person name="Wu S."/>
            <person name="Shi Y."/>
            <person name="Mulligan P."/>
            <person name="Gay F."/>
            <person name="Landry J."/>
            <person name="Liu H."/>
            <person name="Lu J."/>
            <person name="Qi H.H."/>
            <person name="Wang W."/>
            <person name="Nickoloff J.A."/>
            <person name="Wu C."/>
            <person name="Shi Y."/>
        </authorList>
    </citation>
    <scope>FUNCTION IN DNA REPAIR</scope>
    <scope>SUBCELLULAR LOCATION</scope>
    <scope>DNA-BINDING</scope>
    <scope>PROTEIN INTERACTION</scope>
    <scope>IDENTIFICATION IN THE INO80 COMPLEX</scope>
</reference>
<reference key="13">
    <citation type="journal article" date="2008" name="Mol. Cell">
        <title>Kinase-selective enrichment enables quantitative phosphoproteomics of the kinome across the cell cycle.</title>
        <authorList>
            <person name="Daub H."/>
            <person name="Olsen J.V."/>
            <person name="Bairlein M."/>
            <person name="Gnad F."/>
            <person name="Oppermann F.S."/>
            <person name="Korner R."/>
            <person name="Greff Z."/>
            <person name="Keri G."/>
            <person name="Stemmann O."/>
            <person name="Mann M."/>
        </authorList>
    </citation>
    <scope>PHOSPHORYLATION [LARGE SCALE ANALYSIS] AT SER-247</scope>
    <scope>IDENTIFICATION BY MASS SPECTROMETRY [LARGE SCALE ANALYSIS]</scope>
    <source>
        <tissue>Cervix carcinoma</tissue>
    </source>
</reference>
<reference key="14">
    <citation type="journal article" date="2008" name="Mol. Cell">
        <title>Distinct modes of regulation of the Uch37 deubiquitinating enzyme in the proteasome and in the Ino80 chromatin-remodeling complex.</title>
        <authorList>
            <person name="Yao T."/>
            <person name="Song L."/>
            <person name="Jin J."/>
            <person name="Cai Y."/>
            <person name="Takahashi H."/>
            <person name="Swanson S.K."/>
            <person name="Washburn M.P."/>
            <person name="Florens L."/>
            <person name="Conaway R.C."/>
            <person name="Cohen R.E."/>
            <person name="Conaway J.W."/>
        </authorList>
    </citation>
    <scope>IDENTIFICATION IN THE INO80 COMPLEX</scope>
    <scope>IDENTIFICATION BY MASS SPECTROMETRY</scope>
</reference>
<reference key="15">
    <citation type="journal article" date="2008" name="Proc. Natl. Acad. Sci. U.S.A.">
        <title>A quantitative atlas of mitotic phosphorylation.</title>
        <authorList>
            <person name="Dephoure N."/>
            <person name="Zhou C."/>
            <person name="Villen J."/>
            <person name="Beausoleil S.A."/>
            <person name="Bakalarski C.E."/>
            <person name="Elledge S.J."/>
            <person name="Gygi S.P."/>
        </authorList>
    </citation>
    <scope>PHOSPHORYLATION [LARGE SCALE ANALYSIS] AT SER-247 AND THR-378</scope>
    <scope>IDENTIFICATION BY MASS SPECTROMETRY [LARGE SCALE ANALYSIS]</scope>
    <source>
        <tissue>Cervix carcinoma</tissue>
    </source>
</reference>
<reference key="16">
    <citation type="journal article" date="2009" name="Genomics">
        <title>YY1's longer DNA-binding motifs.</title>
        <authorList>
            <person name="Kim J."/>
            <person name="Kim J."/>
        </authorList>
    </citation>
    <scope>DNA-BINDING MOTIF</scope>
</reference>
<reference key="17">
    <citation type="journal article" date="2009" name="Sci. Signal.">
        <title>Quantitative phosphoproteomic analysis of T cell receptor signaling reveals system-wide modulation of protein-protein interactions.</title>
        <authorList>
            <person name="Mayya V."/>
            <person name="Lundgren D.H."/>
            <person name="Hwang S.-I."/>
            <person name="Rezaul K."/>
            <person name="Wu L."/>
            <person name="Eng J.K."/>
            <person name="Rodionov V."/>
            <person name="Han D.K."/>
        </authorList>
    </citation>
    <scope>PHOSPHORYLATION [LARGE SCALE ANALYSIS] AT SER-118 AND SER-247</scope>
    <scope>IDENTIFICATION BY MASS SPECTROMETRY [LARGE SCALE ANALYSIS]</scope>
    <source>
        <tissue>Leukemic T-cell</tissue>
    </source>
</reference>
<reference key="18">
    <citation type="journal article" date="2010" name="Mol. Cell. Biol.">
        <title>The ubiquitin carboxyl hydrolase BAP1 forms a ternary complex with YY1 and HCF-1 and is a critical regulator of gene expression.</title>
        <authorList>
            <person name="Yu H."/>
            <person name="Mashtalir N."/>
            <person name="Daou S."/>
            <person name="Hammond-Martel I."/>
            <person name="Ross J."/>
            <person name="Sui G."/>
            <person name="Hart G.W."/>
            <person name="Rauscher F.J. III"/>
            <person name="Drobetsky E."/>
            <person name="Milot E."/>
            <person name="Shi Y."/>
            <person name="Affar el B."/>
        </authorList>
    </citation>
    <scope>FUNCTION</scope>
    <scope>IDENTIFICATION IN THE PR-DUB COMPLEX</scope>
    <scope>INTERACTION WITH HCFC1 AND BAP1</scope>
    <scope>IDENTIFICATION BY MASS SPECTROMETRY</scope>
</reference>
<reference key="19">
    <citation type="journal article" date="2010" name="PLoS ONE">
        <title>Development and validation of a method for profiling post-translational modification activities using protein microarrays.</title>
        <authorList>
            <person name="Del Rincon S.V."/>
            <person name="Rogers J."/>
            <person name="Widschwendter M."/>
            <person name="Sun D."/>
            <person name="Sieburg H.B."/>
            <person name="Spruck C."/>
        </authorList>
    </citation>
    <scope>UBIQUITINATION</scope>
</reference>
<reference key="20">
    <citation type="journal article" date="2010" name="Sci. Signal.">
        <title>Quantitative phosphoproteomics reveals widespread full phosphorylation site occupancy during mitosis.</title>
        <authorList>
            <person name="Olsen J.V."/>
            <person name="Vermeulen M."/>
            <person name="Santamaria A."/>
            <person name="Kumar C."/>
            <person name="Miller M.L."/>
            <person name="Jensen L.J."/>
            <person name="Gnad F."/>
            <person name="Cox J."/>
            <person name="Jensen T.S."/>
            <person name="Nigg E.A."/>
            <person name="Brunak S."/>
            <person name="Mann M."/>
        </authorList>
    </citation>
    <scope>PHOSPHORYLATION [LARGE SCALE ANALYSIS] AT SER-118</scope>
    <scope>IDENTIFICATION BY MASS SPECTROMETRY [LARGE SCALE ANALYSIS]</scope>
    <source>
        <tissue>Cervix carcinoma</tissue>
    </source>
</reference>
<reference key="21">
    <citation type="journal article" date="2011" name="BMC Syst. Biol.">
        <title>Initial characterization of the human central proteome.</title>
        <authorList>
            <person name="Burkard T.R."/>
            <person name="Planyavsky M."/>
            <person name="Kaupe I."/>
            <person name="Breitwieser F.P."/>
            <person name="Buerckstuemmer T."/>
            <person name="Bennett K.L."/>
            <person name="Superti-Furga G."/>
            <person name="Colinge J."/>
        </authorList>
    </citation>
    <scope>IDENTIFICATION BY MASS SPECTROMETRY [LARGE SCALE ANALYSIS]</scope>
</reference>
<reference key="22">
    <citation type="journal article" date="2011" name="J. Biol. Chem.">
        <title>Subunit organization of the human INO80 chromatin remodeling complex: An evolutionarily conserved core complex catalyzes ATP-dependent nucleosome remodeling.</title>
        <authorList>
            <person name="Chen L."/>
            <person name="Cai Y."/>
            <person name="Jin J."/>
            <person name="Florens L."/>
            <person name="Swanson S.K."/>
            <person name="Washburn M.P."/>
            <person name="Conaway J.W."/>
            <person name="Conaway R.C."/>
        </authorList>
    </citation>
    <scope>IDENTIFICATION IN THE INO80 COMPLEX</scope>
</reference>
<reference key="23">
    <citation type="journal article" date="2011" name="Sci. Signal.">
        <title>System-wide temporal characterization of the proteome and phosphoproteome of human embryonic stem cell differentiation.</title>
        <authorList>
            <person name="Rigbolt K.T."/>
            <person name="Prokhorova T.A."/>
            <person name="Akimov V."/>
            <person name="Henningsen J."/>
            <person name="Johansen P.T."/>
            <person name="Kratchmarova I."/>
            <person name="Kassem M."/>
            <person name="Mann M."/>
            <person name="Olsen J.V."/>
            <person name="Blagoev B."/>
        </authorList>
    </citation>
    <scope>PHOSPHORYLATION [LARGE SCALE ANALYSIS] AT SER-118</scope>
    <scope>IDENTIFICATION BY MASS SPECTROMETRY [LARGE SCALE ANALYSIS]</scope>
</reference>
<reference key="24">
    <citation type="journal article" date="2012" name="Mol. Cell. Biol.">
        <title>Phosphorylation of the transcription factor YY1 by CK2alpha prevents cleavage by caspase 7 during apoptosis.</title>
        <authorList>
            <person name="Riman S."/>
            <person name="Rizkallah R."/>
            <person name="Kassardjian A."/>
            <person name="Alexander K.E."/>
            <person name="Luescher B."/>
            <person name="Hurt M.M."/>
        </authorList>
    </citation>
    <scope>PHOSPHORYLATION AT SER-118</scope>
    <scope>PROTEOLYTIC CLEAVAGE</scope>
    <scope>MUTAGENESIS OF SER-118</scope>
</reference>
<reference key="25">
    <citation type="journal article" date="2013" name="J. Biosci.">
        <title>Regulation of DU145 prostate cancer cell growth by Scm-like with four mbt domains 2.</title>
        <authorList>
            <person name="Lee K."/>
            <person name="Na W."/>
            <person name="Maeng J.H."/>
            <person name="Wu H."/>
            <person name="Ju B.G."/>
        </authorList>
    </citation>
    <scope>INTERACTION WITH SFMBT2</scope>
    <scope>SUBCELLULAR LOCATION</scope>
</reference>
<reference key="26">
    <citation type="journal article" date="2013" name="J. Proteome Res.">
        <title>Toward a comprehensive characterization of a human cancer cell phosphoproteome.</title>
        <authorList>
            <person name="Zhou H."/>
            <person name="Di Palma S."/>
            <person name="Preisinger C."/>
            <person name="Peng M."/>
            <person name="Polat A.N."/>
            <person name="Heck A.J."/>
            <person name="Mohammed S."/>
        </authorList>
    </citation>
    <scope>PHOSPHORYLATION [LARGE SCALE ANALYSIS] AT SER-118; SER-187 AND SER-247</scope>
    <scope>IDENTIFICATION BY MASS SPECTROMETRY [LARGE SCALE ANALYSIS]</scope>
    <source>
        <tissue>Cervix carcinoma</tissue>
        <tissue>Erythroleukemia</tissue>
    </source>
</reference>
<reference key="27">
    <citation type="journal article" date="2014" name="J. Proteomics">
        <title>An enzyme assisted RP-RPLC approach for in-depth analysis of human liver phosphoproteome.</title>
        <authorList>
            <person name="Bian Y."/>
            <person name="Song C."/>
            <person name="Cheng K."/>
            <person name="Dong M."/>
            <person name="Wang F."/>
            <person name="Huang J."/>
            <person name="Sun D."/>
            <person name="Wang L."/>
            <person name="Ye M."/>
            <person name="Zou H."/>
        </authorList>
    </citation>
    <scope>PHOSPHORYLATION [LARGE SCALE ANALYSIS] AT SER-118 AND SER-247</scope>
    <scope>IDENTIFICATION BY MASS SPECTROMETRY [LARGE SCALE ANALYSIS]</scope>
    <source>
        <tissue>Liver</tissue>
    </source>
</reference>
<reference key="28">
    <citation type="journal article" date="2014" name="Nat. Struct. Mol. Biol.">
        <title>Uncovering global SUMOylation signaling networks in a site-specific manner.</title>
        <authorList>
            <person name="Hendriks I.A."/>
            <person name="D'Souza R.C."/>
            <person name="Yang B."/>
            <person name="Verlaan-de Vries M."/>
            <person name="Mann M."/>
            <person name="Vertegaal A.C."/>
        </authorList>
    </citation>
    <scope>SUMOYLATION [LARGE SCALE ANALYSIS] AT LYS-183; LYS-286 AND LYS-288</scope>
    <scope>IDENTIFICATION BY MASS SPECTROMETRY [LARGE SCALE ANALYSIS]</scope>
</reference>
<reference key="29">
    <citation type="journal article" date="2015" name="Cell Rep.">
        <title>SUMO-2 orchestrates chromatin modifiers in response to DNA damage.</title>
        <authorList>
            <person name="Hendriks I.A."/>
            <person name="Treffers L.W."/>
            <person name="Verlaan-de Vries M."/>
            <person name="Olsen J.V."/>
            <person name="Vertegaal A.C."/>
        </authorList>
    </citation>
    <scope>SUMOYLATION [LARGE SCALE ANALYSIS] AT LYS-288</scope>
    <scope>IDENTIFICATION BY MASS SPECTROMETRY [LARGE SCALE ANALYSIS]</scope>
</reference>
<reference key="30">
    <citation type="journal article" date="2015" name="Mol. Cell. Proteomics">
        <title>System-wide analysis of SUMOylation dynamics in response to replication stress reveals novel small ubiquitin-like modified target proteins and acceptor lysines relevant for genome stability.</title>
        <authorList>
            <person name="Xiao Z."/>
            <person name="Chang J.G."/>
            <person name="Hendriks I.A."/>
            <person name="Sigurdsson J.O."/>
            <person name="Olsen J.V."/>
            <person name="Vertegaal A.C."/>
        </authorList>
    </citation>
    <scope>SUMOYLATION [LARGE SCALE ANALYSIS] AT LYS-288</scope>
    <scope>IDENTIFICATION BY MASS SPECTROMETRY [LARGE SCALE ANALYSIS]</scope>
</reference>
<reference key="31">
    <citation type="journal article" date="2017" name="Nat. Struct. Mol. Biol.">
        <title>Site-specific mapping of the human SUMO proteome reveals co-modification with phosphorylation.</title>
        <authorList>
            <person name="Hendriks I.A."/>
            <person name="Lyon D."/>
            <person name="Young C."/>
            <person name="Jensen L.J."/>
            <person name="Vertegaal A.C."/>
            <person name="Nielsen M.L."/>
        </authorList>
    </citation>
    <scope>SUMOYLATION [LARGE SCALE ANALYSIS] AT LYS-182; LYS-183; LYS-208; LYS-230; LYS-286; LYS-288; LYS-409 AND LYS-411</scope>
    <scope>IDENTIFICATION BY MASS SPECTROMETRY [LARGE SCALE ANALYSIS]</scope>
</reference>
<reference key="32">
    <citation type="journal article" date="1996" name="Proc. Natl. Acad. Sci. U.S.A.">
        <title>Cocrystal structure of YY1 bound to the adeno-associated virus P5 initiator.</title>
        <authorList>
            <person name="Houbaviy H.B."/>
            <person name="Usheva A."/>
            <person name="Shenk T."/>
            <person name="Burley S.K."/>
        </authorList>
    </citation>
    <scope>X-RAY CRYSTALLOGRAPHY (2.5 ANGSTROMS) OF 304-414 IN COMPLEX WITH ZINC</scope>
</reference>
<reference key="33">
    <citation type="journal article" date="1998" name="J. Mol. Biol.">
        <title>Design, synthesis and structure of a zinc finger with an artificial beta-turn.</title>
        <authorList>
            <person name="Viles J.H."/>
            <person name="Patel S.U."/>
            <person name="Mitchell J.B.O."/>
            <person name="Moody C.M."/>
            <person name="Justice D.E."/>
            <person name="Uppenbrink J."/>
            <person name="Doyle P.M."/>
            <person name="Harris C.J."/>
            <person name="Sadler P.J."/>
            <person name="Thornton J.M."/>
        </authorList>
    </citation>
    <scope>STRUCTURE BY NMR OF 353-379</scope>
</reference>
<reference key="34">
    <citation type="journal article" date="2010" name="Nat. Genet.">
        <title>A de novo paradigm for mental retardation.</title>
        <authorList>
            <person name="Vissers L.E."/>
            <person name="de Ligt J."/>
            <person name="Gilissen C."/>
            <person name="Janssen I."/>
            <person name="Steehouwer M."/>
            <person name="de Vries P."/>
            <person name="van Lier B."/>
            <person name="Arts P."/>
            <person name="Wieskamp N."/>
            <person name="del Rosario M."/>
            <person name="van Bon B.W."/>
            <person name="Hoischen A."/>
            <person name="de Vries B.B."/>
            <person name="Brunner H.G."/>
            <person name="Veltman J.A."/>
        </authorList>
    </citation>
    <scope>VARIANT GADEVS TYR-380</scope>
</reference>
<reference key="35">
    <citation type="journal article" date="2013" name="Nat. Commun.">
        <title>Whole exome sequencing of insulinoma reveals recurrent T372R mutations in YY1.</title>
        <authorList>
            <person name="Cao Y."/>
            <person name="Gao Z."/>
            <person name="Li L."/>
            <person name="Jiang X."/>
            <person name="Shan A."/>
            <person name="Cai J."/>
            <person name="Peng Y."/>
            <person name="Li Y."/>
            <person name="Jiang X."/>
            <person name="Huang X."/>
            <person name="Wang J."/>
            <person name="Wei Q."/>
            <person name="Qin G."/>
            <person name="Zhao J."/>
            <person name="Jin X."/>
            <person name="Liu L."/>
            <person name="Li Y."/>
            <person name="Wang W."/>
            <person name="Wang J."/>
            <person name="Ning G."/>
        </authorList>
    </citation>
    <scope>VARIANT ARG-372</scope>
    <scope>CHARACTERIZATION OF VARIANT ARG-372</scope>
    <scope>FUNCTION</scope>
</reference>
<reference key="36">
    <citation type="journal article" date="2015" name="Proc. Natl. Acad. Sci. U.S.A.">
        <title>Neomorphic effects of recurrent somatic mutations in Yin Yang 1 in insulin-producing adenomas.</title>
        <authorList>
            <person name="Cromer M.K."/>
            <person name="Choi M."/>
            <person name="Nelson-Williams C."/>
            <person name="Fonseca A.L."/>
            <person name="Kunstman J.W."/>
            <person name="Korah R.M."/>
            <person name="Overton J.D."/>
            <person name="Mane S."/>
            <person name="Kenney B."/>
            <person name="Malchoff C.D."/>
            <person name="Stalberg P."/>
            <person name="Akerstroem G."/>
            <person name="Westin G."/>
            <person name="Hellman P."/>
            <person name="Carling T."/>
            <person name="Bjoerklund P."/>
            <person name="Lifton R.P."/>
        </authorList>
    </citation>
    <scope>VARIANT ARG-372</scope>
    <scope>CHARACTERIZATION OF VARIANT ARG-372</scope>
    <scope>FUNCTION</scope>
</reference>
<reference key="37">
    <citation type="journal article" date="2017" name="Am. J. Hum. Genet.">
        <title>YY1 haploinsufficiency causes an intellectual disability syndrome featuring transcriptional and chromatin dysfunction.</title>
        <authorList>
            <person name="Gabriele M."/>
            <person name="Vulto-van Silfhout A.T."/>
            <person name="Germain P.L."/>
            <person name="Vitriolo A."/>
            <person name="Kumar R."/>
            <person name="Douglas E."/>
            <person name="Haan E."/>
            <person name="Kosaki K."/>
            <person name="Takenouchi T."/>
            <person name="Rauch A."/>
            <person name="Steindl K."/>
            <person name="Frengen E."/>
            <person name="Misceo D."/>
            <person name="Pedurupillay C.R.J."/>
            <person name="Stromme P."/>
            <person name="Rosenfeld J.A."/>
            <person name="Shao Y."/>
            <person name="Craigen W.J."/>
            <person name="Schaaf C.P."/>
            <person name="Rodriguez-Buritica D."/>
            <person name="Farach L."/>
            <person name="Friedman J."/>
            <person name="Thulin P."/>
            <person name="McLean S.D."/>
            <person name="Nugent K.M."/>
            <person name="Morton J."/>
            <person name="Nicholl J."/>
            <person name="Andrieux J."/>
            <person name="Stray-Pedersen A."/>
            <person name="Chambon P."/>
            <person name="Patrier S."/>
            <person name="Lynch S.A."/>
            <person name="Kjaergaard S."/>
            <person name="Toerring P.M."/>
            <person name="Brasch-Andersen C."/>
            <person name="Ronan A."/>
            <person name="van Haeringen A."/>
            <person name="Anderson P.J."/>
            <person name="Powis Z."/>
            <person name="Brunner H.G."/>
            <person name="Pfundt R."/>
            <person name="Schuurs-Hoeijmakers J.H.M."/>
            <person name="van Bon B.W.M."/>
            <person name="Lelieveld S."/>
            <person name="Gilissen C."/>
            <person name="Nillesen W.M."/>
            <person name="Vissers L.E.L.M."/>
            <person name="Gecz J."/>
            <person name="Koolen D.A."/>
            <person name="Testa G."/>
            <person name="de Vries B.B.A."/>
        </authorList>
    </citation>
    <scope>VARIANTS GADEVS 179-LYS--GLN-414 DEL; TYR-320; GLN-339; 344-GLN--GLN-414 DEL; PRO-366; VAL-366; TYR-380 AND LYS-393 DEL</scope>
    <scope>CHARACTERIZATION OF VARIANTS GADEVS PRO-366 AND TYR-380</scope>
    <scope>FUNCTION</scope>
</reference>
<sequence>MASGDTLYIATDGSEMPAEIVELHEIEVETIPVETIETTVVGEEEEEDDDDEDGGGGDHGGGGGHGHAGHHHHHHHHHHHPPMIALQPLVTDDPTQVHHHQEVILVQTREEVVGGDDSDGLRAEDGFEDQILIPVPAPAGGDDDYIEQTLVTVAAAGKSGGGGSSSSGGGRVKKGGGKKSGKKSYLSGGAGAAGGGGADPGNKKWEQKQVQIKTLEGEFSVTMWSSDEKKDIDHETVVEEQIIGENSPPDYSEYMTGKKLPPGGIPGIDLSDPKQLAEFARMKPRKIKEDDAPRTIACPHKGCTKMFRDNSAMRKHLHTHGPRVHVCAECGKAFVESSKLKRHQLVHTGEKPFQCTFEGCGKRFSLDFNLRTHVRIHTGDRPYVCPFDGCNKKFAQSTNLKSHILTHAKAKNNQ</sequence>
<comment type="function">
    <text evidence="4 6 7 8 9 13 18 19 20">Multifunctional transcription factor that exhibits positive and negative control on a large number of cellular and viral genes by binding to sites overlapping the transcription start site (PubMed:15329343, PubMed:17721549, PubMed:24326773, PubMed:25787250). Binds to the consensus sequence 5'-CCGCCATNTT-3'; some genes have been shown to contain a longer binding motif allowing enhanced binding; the initial CG dinucleotide can be methylated greatly reducing the binding affinity (PubMed:15329343, PubMed:17721549, PubMed:24326773, PubMed:25787250). The effect on transcription regulation is depending upon the context in which it binds and diverse mechanisms of action include direct activation or repression, indirect activation or repression via cofactor recruitment, or activation or repression by disruption of binding sites or conformational DNA changes (PubMed:15329343, PubMed:17721549, PubMed:24326773, PubMed:25787250). Its activity is regulated by transcription factors and cytoplasmic proteins that have been shown to abrogate or completely inhibit YY1-mediated activation or repression (PubMed:15329343, PubMed:17721549, PubMed:24326773, PubMed:25787250). For example, it acts as a repressor in absence of adenovirus E1A protein but as an activator in its presence (PubMed:1655281). Acts synergistically with the SMAD1 and SMAD4 in bone morphogenetic protein (BMP)-mediated cardiac-specific gene expression (PubMed:15329343). Binds to SMAD binding elements (SBEs) (5'-GTCT/AGAC-3') within BMP response element (BMPRE) of cardiac activating regions (PubMed:15329343). May play an important role in development and differentiation. Proposed to recruit the PRC2/EED-EZH2 complex to target genes that are transcriptional repressed (PubMed:11158321). Involved in DNA repair (PubMed:18026119, PubMed:28575647). In vitro, binds to DNA recombination intermediate structures (Holliday junctions). Plays a role in regulating enhancer activation (PubMed:28575647). Recruits the PR-DUB complex to specific gene-regulatory regions (PubMed:20805357).</text>
</comment>
<comment type="function">
    <text evidence="8 9">Proposed core component of the chromatin remodeling INO80 complex which is involved in transcriptional regulation, DNA replication and probably DNA repair; proposed to target the INO80 complex to YY1-responsive elements.</text>
</comment>
<comment type="subunit">
    <text evidence="1 4 6 8 9 10 13 15 17 22">Interacts with YAF2 through the region encompassing the first and second zinc fingers (PubMed:9016636). Component of the chromatin remodeling INO80 complex; specifically part of a complex module associated with the DBINO domain of INO80 (PubMed:17721549, PubMed:18026119, PubMed:18922472, PubMed:21303910). Interacts with EED and EZH2; the interactions are indicative for an association with the PRC2/EED-EZH2 complex (PubMed:11158321). Interacts with SFMBT2 (PubMed:23385818). Found in a complex with SMAD1 and SMAD4 (PubMed:15329343). Found in a complex with YY1, SIN3A and HDAC1 (By similarity). Accessory component of the polycomb repressive deubiquitinase (PR-DUB) complex, at least composed of BAP1, one of ASXL1, ASXL2 or (probably) ASXL3 and one of MBD5 or MBD6; the PR-DUB core associates with a number of accessory proteins, including FOXK1, FOXK2, KDM1B, HCFC1, YY1 and OGT (PubMed:20805357). Interacts (via Gly-rich region) with HCFC1; the interaction is direct (PubMed:20805357). Interacts (via C-terminal zinc-finger domains) with BAP1 (via ULD domain); the interaction is direct and requires HCFC1 (PubMed:20805357).</text>
</comment>
<comment type="interaction">
    <interactant intactId="EBI-765538">
        <id>P25490</id>
    </interactant>
    <interactant intactId="EBI-355018">
        <id>O96019</id>
        <label>ACTL6A</label>
    </interactant>
    <organismsDiffer>false</organismsDiffer>
    <experiments>8</experiments>
</comment>
<comment type="interaction">
    <interactant intactId="EBI-765538">
        <id>P25490</id>
    </interactant>
    <interactant intactId="EBI-6925949">
        <id>Q9BYJ1</id>
        <label>ALOXE3</label>
    </interactant>
    <organismsDiffer>false</organismsDiffer>
    <experiments>3</experiments>
</comment>
<comment type="interaction">
    <interactant intactId="EBI-765538">
        <id>P25490</id>
    </interactant>
    <interactant intactId="EBI-743313">
        <id>P49407</id>
        <label>ARRB1</label>
    </interactant>
    <organismsDiffer>false</organismsDiffer>
    <experiments>4</experiments>
</comment>
<comment type="interaction">
    <interactant intactId="EBI-765538">
        <id>P25490</id>
    </interactant>
    <interactant intactId="EBI-78219">
        <id>P45973</id>
        <label>CBX5</label>
    </interactant>
    <organismsDiffer>false</organismsDiffer>
    <experiments>3</experiments>
</comment>
<comment type="interaction">
    <interactant intactId="EBI-765538">
        <id>P25490</id>
    </interactant>
    <interactant intactId="EBI-742887">
        <id>Q8TAP6</id>
        <label>CEP76</label>
    </interactant>
    <organismsDiffer>false</organismsDiffer>
    <experiments>3</experiments>
</comment>
<comment type="interaction">
    <interactant intactId="EBI-765538">
        <id>P25490</id>
    </interactant>
    <interactant intactId="EBI-3867333">
        <id>A8MQ03</id>
        <label>CYSRT1</label>
    </interactant>
    <organismsDiffer>false</organismsDiffer>
    <experiments>3</experiments>
</comment>
<comment type="interaction">
    <interactant intactId="EBI-765538">
        <id>P25490</id>
    </interactant>
    <interactant intactId="EBI-10976677">
        <id>G5E9A7</id>
        <label>DMWD</label>
    </interactant>
    <organismsDiffer>false</organismsDiffer>
    <experiments>3</experiments>
</comment>
<comment type="interaction">
    <interactant intactId="EBI-765538">
        <id>P25490</id>
    </interactant>
    <interactant intactId="EBI-12260294">
        <id>Q9NQ30</id>
        <label>ESM1</label>
    </interactant>
    <organismsDiffer>false</organismsDiffer>
    <experiments>3</experiments>
</comment>
<comment type="interaction">
    <interactant intactId="EBI-765538">
        <id>P25490</id>
    </interactant>
    <interactant intactId="EBI-701903">
        <id>Q14192</id>
        <label>FHL2</label>
    </interactant>
    <organismsDiffer>false</organismsDiffer>
    <experiments>5</experiments>
</comment>
<comment type="interaction">
    <interactant intactId="EBI-765538">
        <id>P25490</id>
    </interactant>
    <interactant intactId="EBI-2548508">
        <id>Q96IK5</id>
        <label>GMCL1</label>
    </interactant>
    <organismsDiffer>false</organismsDiffer>
    <experiments>5</experiments>
</comment>
<comment type="interaction">
    <interactant intactId="EBI-765538">
        <id>P25490</id>
    </interactant>
    <interactant intactId="EBI-15639515">
        <id>O15354</id>
        <label>GPR37</label>
    </interactant>
    <organismsDiffer>false</organismsDiffer>
    <experiments>3</experiments>
</comment>
<comment type="interaction">
    <interactant intactId="EBI-765538">
        <id>P25490</id>
    </interactant>
    <interactant intactId="EBI-747754">
        <id>P28799</id>
        <label>GRN</label>
    </interactant>
    <organismsDiffer>false</organismsDiffer>
    <experiments>4</experiments>
</comment>
<comment type="interaction">
    <interactant intactId="EBI-765538">
        <id>P25490</id>
    </interactant>
    <interactant intactId="EBI-25860013">
        <id>P28799-2</id>
        <label>GRN</label>
    </interactant>
    <organismsDiffer>false</organismsDiffer>
    <experiments>3</experiments>
</comment>
<comment type="interaction">
    <interactant intactId="EBI-765538">
        <id>P25490</id>
    </interactant>
    <interactant intactId="EBI-1031632">
        <id>P22301</id>
        <label>IL10</label>
    </interactant>
    <organismsDiffer>false</organismsDiffer>
    <experiments>3</experiments>
</comment>
<comment type="interaction">
    <interactant intactId="EBI-765538">
        <id>P25490</id>
    </interactant>
    <interactant intactId="EBI-769345">
        <id>Q9ULG1</id>
        <label>INO80</label>
    </interactant>
    <organismsDiffer>false</organismsDiffer>
    <experiments>11</experiments>
</comment>
<comment type="interaction">
    <interactant intactId="EBI-765538">
        <id>P25490</id>
    </interactant>
    <interactant intactId="EBI-11749135">
        <id>Q8IUG1</id>
        <label>KRTAP1-3</label>
    </interactant>
    <organismsDiffer>false</organismsDiffer>
    <experiments>3</experiments>
</comment>
<comment type="interaction">
    <interactant intactId="EBI-765538">
        <id>P25490</id>
    </interactant>
    <interactant intactId="EBI-11741292">
        <id>Q9BYS1</id>
        <label>KRTAP1-5</label>
    </interactant>
    <organismsDiffer>false</organismsDiffer>
    <experiments>3</experiments>
</comment>
<comment type="interaction">
    <interactant intactId="EBI-765538">
        <id>P25490</id>
    </interactant>
    <interactant intactId="EBI-10172150">
        <id>P60370</id>
        <label>KRTAP10-5</label>
    </interactant>
    <organismsDiffer>false</organismsDiffer>
    <experiments>3</experiments>
</comment>
<comment type="interaction">
    <interactant intactId="EBI-765538">
        <id>P25490</id>
    </interactant>
    <interactant intactId="EBI-10171774">
        <id>P60410</id>
        <label>KRTAP10-8</label>
    </interactant>
    <organismsDiffer>false</organismsDiffer>
    <experiments>3</experiments>
</comment>
<comment type="interaction">
    <interactant intactId="EBI-765538">
        <id>P25490</id>
    </interactant>
    <interactant intactId="EBI-10172052">
        <id>P60411</id>
        <label>KRTAP10-9</label>
    </interactant>
    <organismsDiffer>false</organismsDiffer>
    <experiments>3</experiments>
</comment>
<comment type="interaction">
    <interactant intactId="EBI-765538">
        <id>P25490</id>
    </interactant>
    <interactant intactId="EBI-10176379">
        <id>P59991</id>
        <label>KRTAP12-2</label>
    </interactant>
    <organismsDiffer>false</organismsDiffer>
    <experiments>3</experiments>
</comment>
<comment type="interaction">
    <interactant intactId="EBI-765538">
        <id>P25490</id>
    </interactant>
    <interactant intactId="EBI-11953334">
        <id>P60328</id>
        <label>KRTAP12-3</label>
    </interactant>
    <organismsDiffer>false</organismsDiffer>
    <experiments>3</experiments>
</comment>
<comment type="interaction">
    <interactant intactId="EBI-765538">
        <id>P25490</id>
    </interactant>
    <interactant intactId="EBI-11988175">
        <id>Q9BYP8</id>
        <label>KRTAP17-1</label>
    </interactant>
    <organismsDiffer>false</organismsDiffer>
    <experiments>3</experiments>
</comment>
<comment type="interaction">
    <interactant intactId="EBI-765538">
        <id>P25490</id>
    </interactant>
    <interactant intactId="EBI-14065470">
        <id>Q9BYR9</id>
        <label>KRTAP2-4</label>
    </interactant>
    <organismsDiffer>false</organismsDiffer>
    <experiments>3</experiments>
</comment>
<comment type="interaction">
    <interactant intactId="EBI-765538">
        <id>P25490</id>
    </interactant>
    <interactant intactId="EBI-10172511">
        <id>Q9BYR5</id>
        <label>KRTAP4-2</label>
    </interactant>
    <organismsDiffer>false</organismsDiffer>
    <experiments>3</experiments>
</comment>
<comment type="interaction">
    <interactant intactId="EBI-765538">
        <id>P25490</id>
    </interactant>
    <interactant intactId="EBI-11993254">
        <id>Q9BYR2</id>
        <label>KRTAP4-5</label>
    </interactant>
    <organismsDiffer>false</organismsDiffer>
    <experiments>3</experiments>
</comment>
<comment type="interaction">
    <interactant intactId="EBI-765538">
        <id>P25490</id>
    </interactant>
    <interactant intactId="EBI-10250562">
        <id>Q6L8G9</id>
        <label>KRTAP5-6</label>
    </interactant>
    <organismsDiffer>false</organismsDiffer>
    <experiments>3</experiments>
</comment>
<comment type="interaction">
    <interactant intactId="EBI-765538">
        <id>P25490</id>
    </interactant>
    <interactant intactId="EBI-1043191">
        <id>Q9BYQ3</id>
        <label>KRTAP9-3</label>
    </interactant>
    <organismsDiffer>false</organismsDiffer>
    <experiments>3</experiments>
</comment>
<comment type="interaction">
    <interactant intactId="EBI-765538">
        <id>P25490</id>
    </interactant>
    <interactant intactId="EBI-11958364">
        <id>Q9BYQ0</id>
        <label>KRTAP9-8</label>
    </interactant>
    <organismsDiffer>false</organismsDiffer>
    <experiments>5</experiments>
</comment>
<comment type="interaction">
    <interactant intactId="EBI-765538">
        <id>P25490</id>
    </interactant>
    <interactant intactId="EBI-12039345">
        <id>Q9UBR4-2</id>
        <label>LHX3</label>
    </interactant>
    <organismsDiffer>false</organismsDiffer>
    <experiments>3</experiments>
</comment>
<comment type="interaction">
    <interactant intactId="EBI-765538">
        <id>P25490</id>
    </interactant>
    <interactant intactId="EBI-2865388">
        <id>Q969G2</id>
        <label>LHX4</label>
    </interactant>
    <organismsDiffer>false</organismsDiffer>
    <experiments>4</experiments>
</comment>
<comment type="interaction">
    <interactant intactId="EBI-765538">
        <id>P25490</id>
    </interactant>
    <interactant intactId="EBI-724076">
        <id>Q99750</id>
        <label>MDFI</label>
    </interactant>
    <organismsDiffer>false</organismsDiffer>
    <experiments>3</experiments>
</comment>
<comment type="interaction">
    <interactant intactId="EBI-765538">
        <id>P25490</id>
    </interactant>
    <interactant intactId="EBI-394644">
        <id>Q9H944</id>
        <label>MED20</label>
    </interactant>
    <organismsDiffer>false</organismsDiffer>
    <experiments>3</experiments>
</comment>
<comment type="interaction">
    <interactant intactId="EBI-765538">
        <id>P25490</id>
    </interactant>
    <interactant intactId="EBI-742388">
        <id>Q9H8W4</id>
        <label>PLEKHF2</label>
    </interactant>
    <organismsDiffer>false</organismsDiffer>
    <experiments>3</experiments>
</comment>
<comment type="interaction">
    <interactant intactId="EBI-765538">
        <id>P25490</id>
    </interactant>
    <interactant intactId="EBI-352053">
        <id>P78527</id>
        <label>PRKDC</label>
    </interactant>
    <organismsDiffer>false</organismsDiffer>
    <experiments>2</experiments>
</comment>
<comment type="interaction">
    <interactant intactId="EBI-765538">
        <id>P25490</id>
    </interactant>
    <interactant intactId="EBI-746453">
        <id>P54725</id>
        <label>RAD23A</label>
    </interactant>
    <organismsDiffer>false</organismsDiffer>
    <experiments>3</experiments>
</comment>
<comment type="interaction">
    <interactant intactId="EBI-765538">
        <id>P25490</id>
    </interactant>
    <interactant intactId="EBI-353675">
        <id>Q9Y265</id>
        <label>RUVBL1</label>
    </interactant>
    <organismsDiffer>false</organismsDiffer>
    <experiments>10</experiments>
</comment>
<comment type="interaction">
    <interactant intactId="EBI-765538">
        <id>P25490</id>
    </interactant>
    <interactant intactId="EBI-352939">
        <id>Q9Y230</id>
        <label>RUVBL2</label>
    </interactant>
    <organismsDiffer>false</organismsDiffer>
    <experiments>11</experiments>
</comment>
<comment type="interaction">
    <interactant intactId="EBI-765538">
        <id>P25490</id>
    </interactant>
    <interactant intactId="EBI-350723">
        <id>P50454</id>
        <label>SERPINH1</label>
    </interactant>
    <organismsDiffer>false</organismsDiffer>
    <experiments>3</experiments>
</comment>
<comment type="interaction">
    <interactant intactId="EBI-765538">
        <id>P25490</id>
    </interactant>
    <interactant intactId="EBI-2462271">
        <id>Q15428</id>
        <label>SF3A2</label>
    </interactant>
    <organismsDiffer>false</organismsDiffer>
    <experiments>5</experiments>
</comment>
<comment type="interaction">
    <interactant intactId="EBI-765538">
        <id>P25490</id>
    </interactant>
    <interactant intactId="EBI-5235340">
        <id>Q7Z699</id>
        <label>SPRED1</label>
    </interactant>
    <organismsDiffer>false</organismsDiffer>
    <experiments>3</experiments>
</comment>
<comment type="interaction">
    <interactant intactId="EBI-765538">
        <id>P25490</id>
    </interactant>
    <interactant intactId="EBI-296151">
        <id>P37173</id>
        <label>TGFBR2</label>
    </interactant>
    <organismsDiffer>false</organismsDiffer>
    <experiments>3</experiments>
</comment>
<comment type="interaction">
    <interactant intactId="EBI-765538">
        <id>P25490</id>
    </interactant>
    <interactant intactId="EBI-5235829">
        <id>Q8IWZ5</id>
        <label>TRIM42</label>
    </interactant>
    <organismsDiffer>false</organismsDiffer>
    <experiments>3</experiments>
</comment>
<comment type="interaction">
    <interactant intactId="EBI-765538">
        <id>P25490</id>
    </interactant>
    <interactant intactId="EBI-11957238">
        <id>Q2TAL6</id>
        <label>VWC2</label>
    </interactant>
    <organismsDiffer>false</organismsDiffer>
    <experiments>3</experiments>
</comment>
<comment type="interaction">
    <interactant intactId="EBI-765538">
        <id>P25490</id>
    </interactant>
    <interactant intactId="EBI-720609">
        <id>O76024</id>
        <label>WFS1</label>
    </interactant>
    <organismsDiffer>false</organismsDiffer>
    <experiments>3</experiments>
</comment>
<comment type="interaction">
    <interactant intactId="EBI-765538">
        <id>P25490</id>
    </interactant>
    <interactant intactId="EBI-2340004">
        <id>Q9HD64</id>
        <label>XAGE1B</label>
    </interactant>
    <organismsDiffer>false</organismsDiffer>
    <experiments>3</experiments>
</comment>
<comment type="interaction">
    <interactant intactId="EBI-765538">
        <id>P25490</id>
    </interactant>
    <interactant intactId="EBI-946122">
        <id>Q9H869</id>
        <label>YY1AP1</label>
    </interactant>
    <organismsDiffer>false</organismsDiffer>
    <experiments>5</experiments>
</comment>
<comment type="interaction">
    <interactant intactId="EBI-765538">
        <id>P25490</id>
    </interactant>
    <interactant intactId="EBI-12150045">
        <id>Q9H869-2</id>
        <label>YY1AP1</label>
    </interactant>
    <organismsDiffer>false</organismsDiffer>
    <experiments>4</experiments>
</comment>
<comment type="interaction">
    <interactant intactId="EBI-765538">
        <id>P25490</id>
    </interactant>
    <interactant intactId="EBI-18141506">
        <id>Q49A12</id>
        <label>ZNF85</label>
    </interactant>
    <organismsDiffer>false</organismsDiffer>
    <experiments>3</experiments>
</comment>
<comment type="interaction">
    <interactant intactId="EBI-765538">
        <id>P25490</id>
    </interactant>
    <interactant intactId="EBI-7453955">
        <id>Q8JSK4</id>
        <label>E1A</label>
    </interactant>
    <organismsDiffer>true</organismsDiffer>
    <experiments>4</experiments>
</comment>
<comment type="interaction">
    <interactant intactId="EBI-765538">
        <id>P25490</id>
    </interactant>
    <interactant intactId="EBI-929290">
        <id>Q8CCI5</id>
        <label>Rybp</label>
    </interactant>
    <organismsDiffer>true</organismsDiffer>
    <experiments>2</experiments>
</comment>
<comment type="interaction">
    <interactant intactId="EBI-765538">
        <id>P25490</id>
    </interactant>
    <interactant intactId="EBI-6947456">
        <id>P03259</id>
    </interactant>
    <organismsDiffer>true</organismsDiffer>
    <experiments>3</experiments>
</comment>
<comment type="subcellular location">
    <subcellularLocation>
        <location evidence="9 17 23">Nucleus matrix</location>
    </subcellularLocation>
    <text evidence="9 17 23">Associated with the nuclear matrix.</text>
</comment>
<comment type="PTM">
    <text evidence="16">Phosphorylation at Ser-118 by CK2 prevents proteolytic cleavage by caspase-7 (CASP7) during apoptosis.</text>
</comment>
<comment type="PTM">
    <text evidence="16">Proteolytically cleaved by caspase-7 (CASP7) in response to apoptosis (PubMed:22184066). Phosphorylation at Ser-118 protects against proteolytic cleavage (PubMed:22184066).</text>
</comment>
<comment type="PTM">
    <text evidence="5">Transiently poly-ADP-ribosylated by PARP1 upon DNA damage, with the effect of decreasing affinity of YY1 to its cognate DNA binding sites.</text>
</comment>
<comment type="PTM">
    <text evidence="12">Ubiquitinated.</text>
</comment>
<comment type="disease" evidence="14 20">
    <disease id="DI-05032">
        <name>Gabriele-de Vries syndrome</name>
        <acronym>GADEVS</acronym>
        <description>An autosomal dominant neurodevelopmental disorder characterized by delayed psychomotor development and intellectual disability. Most patients have behavioral and feeding problems, movement abnormalities, mild distal skeletal anomalies, and dysmorphic facial features.</description>
        <dbReference type="MIM" id="617557"/>
    </disease>
    <text>The disease is caused by variants affecting the gene represented in this entry.</text>
</comment>
<comment type="similarity">
    <text evidence="24">Belongs to the YY transcription factor family.</text>
</comment>
<protein>
    <recommendedName>
        <fullName>Transcriptional repressor protein YY1</fullName>
    </recommendedName>
    <alternativeName>
        <fullName>Delta transcription factor</fullName>
    </alternativeName>
    <alternativeName>
        <fullName>INO80 complex subunit S</fullName>
    </alternativeName>
    <alternativeName>
        <fullName>NF-E1</fullName>
    </alternativeName>
    <alternativeName>
        <fullName>Yin and yang 1</fullName>
        <shortName>YY-1</shortName>
    </alternativeName>
</protein>